<organism>
    <name type="scientific">Neisseria meningitidis serogroup C (strain 053442)</name>
    <dbReference type="NCBI Taxonomy" id="374833"/>
    <lineage>
        <taxon>Bacteria</taxon>
        <taxon>Pseudomonadati</taxon>
        <taxon>Pseudomonadota</taxon>
        <taxon>Betaproteobacteria</taxon>
        <taxon>Neisseriales</taxon>
        <taxon>Neisseriaceae</taxon>
        <taxon>Neisseria</taxon>
    </lineage>
</organism>
<evidence type="ECO:0000255" key="1">
    <source>
        <dbReference type="HAMAP-Rule" id="MF_00418"/>
    </source>
</evidence>
<evidence type="ECO:0000305" key="2"/>
<gene>
    <name evidence="1" type="primary">dapA</name>
    <name type="ordered locus">NMCC_0872</name>
</gene>
<comment type="function">
    <text evidence="1">Catalyzes the condensation of (S)-aspartate-beta-semialdehyde [(S)-ASA] and pyruvate to 4-hydroxy-tetrahydrodipicolinate (HTPA).</text>
</comment>
<comment type="catalytic activity">
    <reaction evidence="1">
        <text>L-aspartate 4-semialdehyde + pyruvate = (2S,4S)-4-hydroxy-2,3,4,5-tetrahydrodipicolinate + H2O + H(+)</text>
        <dbReference type="Rhea" id="RHEA:34171"/>
        <dbReference type="ChEBI" id="CHEBI:15361"/>
        <dbReference type="ChEBI" id="CHEBI:15377"/>
        <dbReference type="ChEBI" id="CHEBI:15378"/>
        <dbReference type="ChEBI" id="CHEBI:67139"/>
        <dbReference type="ChEBI" id="CHEBI:537519"/>
        <dbReference type="EC" id="4.3.3.7"/>
    </reaction>
</comment>
<comment type="pathway">
    <text evidence="1">Amino-acid biosynthesis; L-lysine biosynthesis via DAP pathway; (S)-tetrahydrodipicolinate from L-aspartate: step 3/4.</text>
</comment>
<comment type="subunit">
    <text evidence="1">Homotetramer; dimer of dimers.</text>
</comment>
<comment type="subcellular location">
    <subcellularLocation>
        <location evidence="1">Cytoplasm</location>
    </subcellularLocation>
</comment>
<comment type="similarity">
    <text evidence="1">Belongs to the DapA family.</text>
</comment>
<comment type="caution">
    <text evidence="2">Was originally thought to be a dihydrodipicolinate synthase (DHDPS), catalyzing the condensation of (S)-aspartate-beta-semialdehyde [(S)-ASA] and pyruvate to dihydrodipicolinate (DHDP). However, it was shown in E.coli that the product of the enzymatic reaction is not dihydrodipicolinate but in fact (4S)-4-hydroxy-2,3,4,5-tetrahydro-(2S)-dipicolinic acid (HTPA), and that the consecutive dehydration reaction leading to DHDP is not spontaneous but catalyzed by DapB.</text>
</comment>
<proteinExistence type="inferred from homology"/>
<protein>
    <recommendedName>
        <fullName evidence="1">4-hydroxy-tetrahydrodipicolinate synthase</fullName>
        <shortName evidence="1">HTPA synthase</shortName>
        <ecNumber evidence="1">4.3.3.7</ecNumber>
    </recommendedName>
</protein>
<name>DAPA_NEIM0</name>
<sequence length="291" mass="30854">MLQGSLVALITPMNQDGSIHYEQLRDLIDWHIENGTDGIVAVGTTGESATLSVEEHTAVIEAVVKHVAKRVPVIAGTGANNTVEAIALSQAAEKAGADYTLSVVPYYNKPSQEGMYRHFKAVAEAAAIPMILYNVPGRTVVSMNNETILRLAEIPNIVGVKEASGNIGSNIELINRAPEGFFVLSGDDHTALPFMLCGGHGVITVAANAAPKLFADMCRAALQGDIALARELNDRLIPIYDTMFCEPSPAAPKWAVSALGRCEPHVRLPLVPLTEGGQAKVRAALKASGQL</sequence>
<dbReference type="EC" id="4.3.3.7" evidence="1"/>
<dbReference type="EMBL" id="CP000381">
    <property type="protein sequence ID" value="ABX73054.1"/>
    <property type="molecule type" value="Genomic_DNA"/>
</dbReference>
<dbReference type="RefSeq" id="WP_012221541.1">
    <property type="nucleotide sequence ID" value="NC_010120.1"/>
</dbReference>
<dbReference type="SMR" id="A9M4C8"/>
<dbReference type="KEGG" id="nmn:NMCC_0872"/>
<dbReference type="HOGENOM" id="CLU_049343_7_1_4"/>
<dbReference type="UniPathway" id="UPA00034">
    <property type="reaction ID" value="UER00017"/>
</dbReference>
<dbReference type="Proteomes" id="UP000001177">
    <property type="component" value="Chromosome"/>
</dbReference>
<dbReference type="GO" id="GO:0005829">
    <property type="term" value="C:cytosol"/>
    <property type="evidence" value="ECO:0007669"/>
    <property type="project" value="TreeGrafter"/>
</dbReference>
<dbReference type="GO" id="GO:0008840">
    <property type="term" value="F:4-hydroxy-tetrahydrodipicolinate synthase activity"/>
    <property type="evidence" value="ECO:0007669"/>
    <property type="project" value="UniProtKB-UniRule"/>
</dbReference>
<dbReference type="GO" id="GO:0019877">
    <property type="term" value="P:diaminopimelate biosynthetic process"/>
    <property type="evidence" value="ECO:0007669"/>
    <property type="project" value="UniProtKB-UniRule"/>
</dbReference>
<dbReference type="GO" id="GO:0009089">
    <property type="term" value="P:lysine biosynthetic process via diaminopimelate"/>
    <property type="evidence" value="ECO:0007669"/>
    <property type="project" value="UniProtKB-UniRule"/>
</dbReference>
<dbReference type="CDD" id="cd00950">
    <property type="entry name" value="DHDPS"/>
    <property type="match status" value="1"/>
</dbReference>
<dbReference type="Gene3D" id="3.20.20.70">
    <property type="entry name" value="Aldolase class I"/>
    <property type="match status" value="1"/>
</dbReference>
<dbReference type="HAMAP" id="MF_00418">
    <property type="entry name" value="DapA"/>
    <property type="match status" value="1"/>
</dbReference>
<dbReference type="InterPro" id="IPR013785">
    <property type="entry name" value="Aldolase_TIM"/>
</dbReference>
<dbReference type="InterPro" id="IPR005263">
    <property type="entry name" value="DapA"/>
</dbReference>
<dbReference type="InterPro" id="IPR002220">
    <property type="entry name" value="DapA-like"/>
</dbReference>
<dbReference type="InterPro" id="IPR020625">
    <property type="entry name" value="Schiff_base-form_aldolases_AS"/>
</dbReference>
<dbReference type="InterPro" id="IPR020624">
    <property type="entry name" value="Schiff_base-form_aldolases_CS"/>
</dbReference>
<dbReference type="NCBIfam" id="TIGR00674">
    <property type="entry name" value="dapA"/>
    <property type="match status" value="1"/>
</dbReference>
<dbReference type="PANTHER" id="PTHR12128:SF66">
    <property type="entry name" value="4-HYDROXY-2-OXOGLUTARATE ALDOLASE, MITOCHONDRIAL"/>
    <property type="match status" value="1"/>
</dbReference>
<dbReference type="PANTHER" id="PTHR12128">
    <property type="entry name" value="DIHYDRODIPICOLINATE SYNTHASE"/>
    <property type="match status" value="1"/>
</dbReference>
<dbReference type="Pfam" id="PF00701">
    <property type="entry name" value="DHDPS"/>
    <property type="match status" value="1"/>
</dbReference>
<dbReference type="PIRSF" id="PIRSF001365">
    <property type="entry name" value="DHDPS"/>
    <property type="match status" value="1"/>
</dbReference>
<dbReference type="PRINTS" id="PR00146">
    <property type="entry name" value="DHPICSNTHASE"/>
</dbReference>
<dbReference type="SMART" id="SM01130">
    <property type="entry name" value="DHDPS"/>
    <property type="match status" value="1"/>
</dbReference>
<dbReference type="SUPFAM" id="SSF51569">
    <property type="entry name" value="Aldolase"/>
    <property type="match status" value="1"/>
</dbReference>
<dbReference type="PROSITE" id="PS00665">
    <property type="entry name" value="DHDPS_1"/>
    <property type="match status" value="1"/>
</dbReference>
<dbReference type="PROSITE" id="PS00666">
    <property type="entry name" value="DHDPS_2"/>
    <property type="match status" value="1"/>
</dbReference>
<accession>A9M4C8</accession>
<reference key="1">
    <citation type="journal article" date="2008" name="Genomics">
        <title>Characterization of ST-4821 complex, a unique Neisseria meningitidis clone.</title>
        <authorList>
            <person name="Peng J."/>
            <person name="Yang L."/>
            <person name="Yang F."/>
            <person name="Yang J."/>
            <person name="Yan Y."/>
            <person name="Nie H."/>
            <person name="Zhang X."/>
            <person name="Xiong Z."/>
            <person name="Jiang Y."/>
            <person name="Cheng F."/>
            <person name="Xu X."/>
            <person name="Chen S."/>
            <person name="Sun L."/>
            <person name="Li W."/>
            <person name="Shen Y."/>
            <person name="Shao Z."/>
            <person name="Liang X."/>
            <person name="Xu J."/>
            <person name="Jin Q."/>
        </authorList>
    </citation>
    <scope>NUCLEOTIDE SEQUENCE [LARGE SCALE GENOMIC DNA]</scope>
    <source>
        <strain>053442</strain>
    </source>
</reference>
<feature type="chain" id="PRO_1000080534" description="4-hydroxy-tetrahydrodipicolinate synthase">
    <location>
        <begin position="1"/>
        <end position="291"/>
    </location>
</feature>
<feature type="active site" description="Proton donor/acceptor" evidence="1">
    <location>
        <position position="133"/>
    </location>
</feature>
<feature type="active site" description="Schiff-base intermediate with substrate" evidence="1">
    <location>
        <position position="161"/>
    </location>
</feature>
<feature type="binding site" evidence="1">
    <location>
        <position position="45"/>
    </location>
    <ligand>
        <name>pyruvate</name>
        <dbReference type="ChEBI" id="CHEBI:15361"/>
    </ligand>
</feature>
<feature type="binding site" evidence="1">
    <location>
        <position position="203"/>
    </location>
    <ligand>
        <name>pyruvate</name>
        <dbReference type="ChEBI" id="CHEBI:15361"/>
    </ligand>
</feature>
<feature type="site" description="Part of a proton relay during catalysis" evidence="1">
    <location>
        <position position="44"/>
    </location>
</feature>
<feature type="site" description="Part of a proton relay during catalysis" evidence="1">
    <location>
        <position position="107"/>
    </location>
</feature>
<keyword id="KW-0028">Amino-acid biosynthesis</keyword>
<keyword id="KW-0963">Cytoplasm</keyword>
<keyword id="KW-0220">Diaminopimelate biosynthesis</keyword>
<keyword id="KW-0456">Lyase</keyword>
<keyword id="KW-0457">Lysine biosynthesis</keyword>
<keyword id="KW-0704">Schiff base</keyword>